<gene>
    <name evidence="1" type="primary">acpP</name>
    <name type="ordered locus">cce_4117</name>
</gene>
<organism>
    <name type="scientific">Crocosphaera subtropica (strain ATCC 51142 / BH68)</name>
    <name type="common">Cyanothece sp. (strain ATCC 51142)</name>
    <dbReference type="NCBI Taxonomy" id="43989"/>
    <lineage>
        <taxon>Bacteria</taxon>
        <taxon>Bacillati</taxon>
        <taxon>Cyanobacteriota</taxon>
        <taxon>Cyanophyceae</taxon>
        <taxon>Oscillatoriophycideae</taxon>
        <taxon>Chroococcales</taxon>
        <taxon>Aphanothecaceae</taxon>
        <taxon>Crocosphaera</taxon>
        <taxon>Crocosphaera subtropica</taxon>
    </lineage>
</organism>
<feature type="chain" id="PRO_1000164781" description="Acyl carrier protein">
    <location>
        <begin position="1"/>
        <end position="81"/>
    </location>
</feature>
<feature type="domain" description="Carrier" evidence="2">
    <location>
        <begin position="3"/>
        <end position="78"/>
    </location>
</feature>
<feature type="modified residue" description="O-(pantetheine 4'-phosphoryl)serine" evidence="2">
    <location>
        <position position="38"/>
    </location>
</feature>
<dbReference type="EMBL" id="CP000806">
    <property type="protein sequence ID" value="ACB53465.1"/>
    <property type="molecule type" value="Genomic_DNA"/>
</dbReference>
<dbReference type="RefSeq" id="WP_009543803.1">
    <property type="nucleotide sequence ID" value="NC_010546.1"/>
</dbReference>
<dbReference type="SMR" id="B1WRM4"/>
<dbReference type="STRING" id="43989.cce_4117"/>
<dbReference type="KEGG" id="cyt:cce_4117"/>
<dbReference type="eggNOG" id="COG0236">
    <property type="taxonomic scope" value="Bacteria"/>
</dbReference>
<dbReference type="HOGENOM" id="CLU_108696_5_1_3"/>
<dbReference type="OrthoDB" id="9804551at2"/>
<dbReference type="UniPathway" id="UPA00094"/>
<dbReference type="Proteomes" id="UP000001203">
    <property type="component" value="Chromosome circular"/>
</dbReference>
<dbReference type="GO" id="GO:0005829">
    <property type="term" value="C:cytosol"/>
    <property type="evidence" value="ECO:0007669"/>
    <property type="project" value="TreeGrafter"/>
</dbReference>
<dbReference type="GO" id="GO:0016020">
    <property type="term" value="C:membrane"/>
    <property type="evidence" value="ECO:0007669"/>
    <property type="project" value="GOC"/>
</dbReference>
<dbReference type="GO" id="GO:0000035">
    <property type="term" value="F:acyl binding"/>
    <property type="evidence" value="ECO:0007669"/>
    <property type="project" value="TreeGrafter"/>
</dbReference>
<dbReference type="GO" id="GO:0000036">
    <property type="term" value="F:acyl carrier activity"/>
    <property type="evidence" value="ECO:0007669"/>
    <property type="project" value="UniProtKB-UniRule"/>
</dbReference>
<dbReference type="GO" id="GO:0009245">
    <property type="term" value="P:lipid A biosynthetic process"/>
    <property type="evidence" value="ECO:0007669"/>
    <property type="project" value="TreeGrafter"/>
</dbReference>
<dbReference type="FunFam" id="1.10.1200.10:FF:000001">
    <property type="entry name" value="Acyl carrier protein"/>
    <property type="match status" value="1"/>
</dbReference>
<dbReference type="Gene3D" id="1.10.1200.10">
    <property type="entry name" value="ACP-like"/>
    <property type="match status" value="1"/>
</dbReference>
<dbReference type="HAMAP" id="MF_01217">
    <property type="entry name" value="Acyl_carrier"/>
    <property type="match status" value="1"/>
</dbReference>
<dbReference type="InterPro" id="IPR003231">
    <property type="entry name" value="ACP"/>
</dbReference>
<dbReference type="InterPro" id="IPR036736">
    <property type="entry name" value="ACP-like_sf"/>
</dbReference>
<dbReference type="InterPro" id="IPR009081">
    <property type="entry name" value="PP-bd_ACP"/>
</dbReference>
<dbReference type="InterPro" id="IPR006162">
    <property type="entry name" value="Ppantetheine_attach_site"/>
</dbReference>
<dbReference type="NCBIfam" id="TIGR00517">
    <property type="entry name" value="acyl_carrier"/>
    <property type="match status" value="1"/>
</dbReference>
<dbReference type="NCBIfam" id="NF002148">
    <property type="entry name" value="PRK00982.1-2"/>
    <property type="match status" value="1"/>
</dbReference>
<dbReference type="NCBIfam" id="NF002149">
    <property type="entry name" value="PRK00982.1-3"/>
    <property type="match status" value="1"/>
</dbReference>
<dbReference type="NCBIfam" id="NF002150">
    <property type="entry name" value="PRK00982.1-4"/>
    <property type="match status" value="1"/>
</dbReference>
<dbReference type="NCBIfam" id="NF002151">
    <property type="entry name" value="PRK00982.1-5"/>
    <property type="match status" value="1"/>
</dbReference>
<dbReference type="PANTHER" id="PTHR20863">
    <property type="entry name" value="ACYL CARRIER PROTEIN"/>
    <property type="match status" value="1"/>
</dbReference>
<dbReference type="PANTHER" id="PTHR20863:SF76">
    <property type="entry name" value="CARRIER DOMAIN-CONTAINING PROTEIN"/>
    <property type="match status" value="1"/>
</dbReference>
<dbReference type="Pfam" id="PF00550">
    <property type="entry name" value="PP-binding"/>
    <property type="match status" value="1"/>
</dbReference>
<dbReference type="SUPFAM" id="SSF47336">
    <property type="entry name" value="ACP-like"/>
    <property type="match status" value="1"/>
</dbReference>
<dbReference type="PROSITE" id="PS50075">
    <property type="entry name" value="CARRIER"/>
    <property type="match status" value="1"/>
</dbReference>
<dbReference type="PROSITE" id="PS00012">
    <property type="entry name" value="PHOSPHOPANTETHEINE"/>
    <property type="match status" value="1"/>
</dbReference>
<sequence length="81" mass="8973">MNQEIFEKVKSIVVEQLEVEEDTVTPEANFANDLGADSLDTVELVMALEEEFDIEIPDEAAENIGTVQAAVDYIEKEQAKA</sequence>
<comment type="function">
    <text evidence="1">Carrier of the growing fatty acid chain in fatty acid biosynthesis.</text>
</comment>
<comment type="pathway">
    <text evidence="1">Lipid metabolism; fatty acid biosynthesis.</text>
</comment>
<comment type="subcellular location">
    <subcellularLocation>
        <location evidence="1">Cytoplasm</location>
    </subcellularLocation>
</comment>
<comment type="PTM">
    <text evidence="1">4'-phosphopantetheine is transferred from CoA to a specific serine of apo-ACP by AcpS. This modification is essential for activity because fatty acids are bound in thioester linkage to the sulfhydryl of the prosthetic group.</text>
</comment>
<comment type="similarity">
    <text evidence="1">Belongs to the acyl carrier protein (ACP) family.</text>
</comment>
<protein>
    <recommendedName>
        <fullName evidence="1">Acyl carrier protein</fullName>
        <shortName evidence="1">ACP</shortName>
    </recommendedName>
</protein>
<evidence type="ECO:0000255" key="1">
    <source>
        <dbReference type="HAMAP-Rule" id="MF_01217"/>
    </source>
</evidence>
<evidence type="ECO:0000255" key="2">
    <source>
        <dbReference type="PROSITE-ProRule" id="PRU00258"/>
    </source>
</evidence>
<name>ACP_CROS5</name>
<keyword id="KW-0963">Cytoplasm</keyword>
<keyword id="KW-0275">Fatty acid biosynthesis</keyword>
<keyword id="KW-0276">Fatty acid metabolism</keyword>
<keyword id="KW-0444">Lipid biosynthesis</keyword>
<keyword id="KW-0443">Lipid metabolism</keyword>
<keyword id="KW-0596">Phosphopantetheine</keyword>
<keyword id="KW-0597">Phosphoprotein</keyword>
<keyword id="KW-1185">Reference proteome</keyword>
<reference key="1">
    <citation type="journal article" date="2008" name="Proc. Natl. Acad. Sci. U.S.A.">
        <title>The genome of Cyanothece 51142, a unicellular diazotrophic cyanobacterium important in the marine nitrogen cycle.</title>
        <authorList>
            <person name="Welsh E.A."/>
            <person name="Liberton M."/>
            <person name="Stoeckel J."/>
            <person name="Loh T."/>
            <person name="Elvitigala T."/>
            <person name="Wang C."/>
            <person name="Wollam A."/>
            <person name="Fulton R.S."/>
            <person name="Clifton S.W."/>
            <person name="Jacobs J.M."/>
            <person name="Aurora R."/>
            <person name="Ghosh B.K."/>
            <person name="Sherman L.A."/>
            <person name="Smith R.D."/>
            <person name="Wilson R.K."/>
            <person name="Pakrasi H.B."/>
        </authorList>
    </citation>
    <scope>NUCLEOTIDE SEQUENCE [LARGE SCALE GENOMIC DNA]</scope>
    <source>
        <strain>ATCC 51142 / BH68</strain>
    </source>
</reference>
<accession>B1WRM4</accession>
<proteinExistence type="inferred from homology"/>